<feature type="chain" id="PRO_0000427002" description="Heme chaperone HemW">
    <location>
        <begin position="1"/>
        <end position="390"/>
    </location>
</feature>
<feature type="domain" description="Radical SAM core" evidence="4">
    <location>
        <begin position="15"/>
        <end position="254"/>
    </location>
</feature>
<feature type="binding site" evidence="1">
    <location>
        <position position="24"/>
    </location>
    <ligand>
        <name>S-adenosyl-L-methionine</name>
        <dbReference type="ChEBI" id="CHEBI:59789"/>
        <label>1</label>
    </ligand>
</feature>
<feature type="binding site" evidence="1">
    <location>
        <position position="30"/>
    </location>
    <ligand>
        <name>[4Fe-4S] cluster</name>
        <dbReference type="ChEBI" id="CHEBI:49883"/>
        <note>4Fe-4S-S-AdoMet</note>
    </ligand>
</feature>
<feature type="binding site" evidence="1">
    <location>
        <position position="34"/>
    </location>
    <ligand>
        <name>[4Fe-4S] cluster</name>
        <dbReference type="ChEBI" id="CHEBI:49883"/>
        <note>4Fe-4S-S-AdoMet</note>
    </ligand>
</feature>
<feature type="binding site" evidence="1">
    <location>
        <position position="37"/>
    </location>
    <ligand>
        <name>[4Fe-4S] cluster</name>
        <dbReference type="ChEBI" id="CHEBI:49883"/>
        <note>4Fe-4S-S-AdoMet</note>
    </ligand>
</feature>
<feature type="binding site" evidence="1">
    <location>
        <position position="82"/>
    </location>
    <ligand>
        <name>S-adenosyl-L-methionine</name>
        <dbReference type="ChEBI" id="CHEBI:59789"/>
        <label>1</label>
    </ligand>
</feature>
<feature type="binding site" evidence="1">
    <location>
        <begin position="83"/>
        <end position="84"/>
    </location>
    <ligand>
        <name>S-adenosyl-L-methionine</name>
        <dbReference type="ChEBI" id="CHEBI:59789"/>
        <label>2</label>
    </ligand>
</feature>
<feature type="binding site" evidence="1">
    <location>
        <position position="115"/>
    </location>
    <ligand>
        <name>S-adenosyl-L-methionine</name>
        <dbReference type="ChEBI" id="CHEBI:59789"/>
        <label>1</label>
    </ligand>
</feature>
<feature type="binding site" evidence="1">
    <location>
        <position position="142"/>
    </location>
    <ligand>
        <name>S-adenosyl-L-methionine</name>
        <dbReference type="ChEBI" id="CHEBI:59789"/>
        <label>2</label>
    </ligand>
</feature>
<feature type="binding site" evidence="1">
    <location>
        <position position="154"/>
    </location>
    <ligand>
        <name>S-adenosyl-L-methionine</name>
        <dbReference type="ChEBI" id="CHEBI:59789"/>
        <label>2</label>
    </ligand>
</feature>
<feature type="binding site" evidence="1">
    <location>
        <position position="179"/>
    </location>
    <ligand>
        <name>S-adenosyl-L-methionine</name>
        <dbReference type="ChEBI" id="CHEBI:59789"/>
        <label>2</label>
    </ligand>
</feature>
<reference key="1">
    <citation type="journal article" date="2002" name="J. Bacteriol.">
        <title>Whole-genome comparison of Mycobacterium tuberculosis clinical and laboratory strains.</title>
        <authorList>
            <person name="Fleischmann R.D."/>
            <person name="Alland D."/>
            <person name="Eisen J.A."/>
            <person name="Carpenter L."/>
            <person name="White O."/>
            <person name="Peterson J.D."/>
            <person name="DeBoy R.T."/>
            <person name="Dodson R.J."/>
            <person name="Gwinn M.L."/>
            <person name="Haft D.H."/>
            <person name="Hickey E.K."/>
            <person name="Kolonay J.F."/>
            <person name="Nelson W.C."/>
            <person name="Umayam L.A."/>
            <person name="Ermolaeva M.D."/>
            <person name="Salzberg S.L."/>
            <person name="Delcher A."/>
            <person name="Utterback T.R."/>
            <person name="Weidman J.F."/>
            <person name="Khouri H.M."/>
            <person name="Gill J."/>
            <person name="Mikula A."/>
            <person name="Bishai W."/>
            <person name="Jacobs W.R. Jr."/>
            <person name="Venter J.C."/>
            <person name="Fraser C.M."/>
        </authorList>
    </citation>
    <scope>NUCLEOTIDE SEQUENCE [LARGE SCALE GENOMIC DNA]</scope>
    <source>
        <strain>CDC 1551 / Oshkosh</strain>
    </source>
</reference>
<name>HEMW_MYCTO</name>
<keyword id="KW-0004">4Fe-4S</keyword>
<keyword id="KW-0143">Chaperone</keyword>
<keyword id="KW-0963">Cytoplasm</keyword>
<keyword id="KW-0349">Heme</keyword>
<keyword id="KW-0408">Iron</keyword>
<keyword id="KW-0411">Iron-sulfur</keyword>
<keyword id="KW-0479">Metal-binding</keyword>
<keyword id="KW-1185">Reference proteome</keyword>
<keyword id="KW-0949">S-adenosyl-L-methionine</keyword>
<accession>P9WP72</accession>
<accession>L0TCD5</accession>
<accession>P71756</accession>
<evidence type="ECO:0000250" key="1">
    <source>
        <dbReference type="UniProtKB" id="P32131"/>
    </source>
</evidence>
<evidence type="ECO:0000250" key="2">
    <source>
        <dbReference type="UniProtKB" id="P52062"/>
    </source>
</evidence>
<evidence type="ECO:0000250" key="3">
    <source>
        <dbReference type="UniProtKB" id="Q9CGF7"/>
    </source>
</evidence>
<evidence type="ECO:0000255" key="4">
    <source>
        <dbReference type="PROSITE-ProRule" id="PRU01266"/>
    </source>
</evidence>
<evidence type="ECO:0000305" key="5"/>
<organism>
    <name type="scientific">Mycobacterium tuberculosis (strain CDC 1551 / Oshkosh)</name>
    <dbReference type="NCBI Taxonomy" id="83331"/>
    <lineage>
        <taxon>Bacteria</taxon>
        <taxon>Bacillati</taxon>
        <taxon>Actinomycetota</taxon>
        <taxon>Actinomycetes</taxon>
        <taxon>Mycobacteriales</taxon>
        <taxon>Mycobacteriaceae</taxon>
        <taxon>Mycobacterium</taxon>
        <taxon>Mycobacterium tuberculosis complex</taxon>
    </lineage>
</organism>
<dbReference type="EMBL" id="AE000516">
    <property type="protein sequence ID" value="AAK46752.1"/>
    <property type="molecule type" value="Genomic_DNA"/>
</dbReference>
<dbReference type="PIR" id="G70681">
    <property type="entry name" value="G70681"/>
</dbReference>
<dbReference type="RefSeq" id="WP_003412290.1">
    <property type="nucleotide sequence ID" value="NZ_KK341227.1"/>
</dbReference>
<dbReference type="SMR" id="P9WP72"/>
<dbReference type="KEGG" id="mtc:MT2457"/>
<dbReference type="PATRIC" id="fig|83331.31.peg.2648"/>
<dbReference type="HOGENOM" id="CLU_027579_1_0_11"/>
<dbReference type="Proteomes" id="UP000001020">
    <property type="component" value="Chromosome"/>
</dbReference>
<dbReference type="GO" id="GO:0005737">
    <property type="term" value="C:cytoplasm"/>
    <property type="evidence" value="ECO:0000250"/>
    <property type="project" value="UniProtKB"/>
</dbReference>
<dbReference type="GO" id="GO:0051539">
    <property type="term" value="F:4 iron, 4 sulfur cluster binding"/>
    <property type="evidence" value="ECO:0000250"/>
    <property type="project" value="UniProtKB"/>
</dbReference>
<dbReference type="GO" id="GO:0004109">
    <property type="term" value="F:coproporphyrinogen oxidase activity"/>
    <property type="evidence" value="ECO:0007669"/>
    <property type="project" value="InterPro"/>
</dbReference>
<dbReference type="GO" id="GO:0046872">
    <property type="term" value="F:metal ion binding"/>
    <property type="evidence" value="ECO:0007669"/>
    <property type="project" value="UniProtKB-KW"/>
</dbReference>
<dbReference type="GO" id="GO:0006779">
    <property type="term" value="P:porphyrin-containing compound biosynthetic process"/>
    <property type="evidence" value="ECO:0000250"/>
    <property type="project" value="UniProtKB"/>
</dbReference>
<dbReference type="Gene3D" id="3.20.20.70">
    <property type="entry name" value="Aldolase class I"/>
    <property type="match status" value="1"/>
</dbReference>
<dbReference type="InterPro" id="IPR013785">
    <property type="entry name" value="Aldolase_TIM"/>
</dbReference>
<dbReference type="InterPro" id="IPR034505">
    <property type="entry name" value="Coproporphyrinogen-III_oxidase"/>
</dbReference>
<dbReference type="InterPro" id="IPR006638">
    <property type="entry name" value="Elp3/MiaA/NifB-like_rSAM"/>
</dbReference>
<dbReference type="InterPro" id="IPR004559">
    <property type="entry name" value="HemW-like"/>
</dbReference>
<dbReference type="InterPro" id="IPR007197">
    <property type="entry name" value="rSAM"/>
</dbReference>
<dbReference type="NCBIfam" id="TIGR00539">
    <property type="entry name" value="hemN_rel"/>
    <property type="match status" value="1"/>
</dbReference>
<dbReference type="PANTHER" id="PTHR13932">
    <property type="entry name" value="COPROPORPHYRINIGEN III OXIDASE"/>
    <property type="match status" value="1"/>
</dbReference>
<dbReference type="PANTHER" id="PTHR13932:SF5">
    <property type="entry name" value="RADICAL S-ADENOSYL METHIONINE DOMAIN-CONTAINING PROTEIN 1, MITOCHONDRIAL"/>
    <property type="match status" value="1"/>
</dbReference>
<dbReference type="Pfam" id="PF04055">
    <property type="entry name" value="Radical_SAM"/>
    <property type="match status" value="1"/>
</dbReference>
<dbReference type="SFLD" id="SFLDF00562">
    <property type="entry name" value="HemN-like__clustered_with_heat"/>
    <property type="match status" value="1"/>
</dbReference>
<dbReference type="SFLD" id="SFLDF00288">
    <property type="entry name" value="HemN-like__clustered_with_nucl"/>
    <property type="match status" value="1"/>
</dbReference>
<dbReference type="SFLD" id="SFLDS00029">
    <property type="entry name" value="Radical_SAM"/>
    <property type="match status" value="1"/>
</dbReference>
<dbReference type="SMART" id="SM00729">
    <property type="entry name" value="Elp3"/>
    <property type="match status" value="1"/>
</dbReference>
<dbReference type="SUPFAM" id="SSF102114">
    <property type="entry name" value="Radical SAM enzymes"/>
    <property type="match status" value="1"/>
</dbReference>
<dbReference type="PROSITE" id="PS51918">
    <property type="entry name" value="RADICAL_SAM"/>
    <property type="match status" value="1"/>
</dbReference>
<gene>
    <name evidence="2" type="primary">hemW</name>
    <name type="synonym">hemN</name>
    <name type="ordered locus">MT2457</name>
</gene>
<sequence length="390" mass="41941">MVFRQAPVELPGLAPMPGQPFGVYLHVPFCLTRCGYCDFNTYTPAQLGGVSPDRWLLALRAELELAAAKLDAPTVHTVYVGGGTPSLLGGERLATLLDMVRDHFVLAPDAEVSTEANPESTWPEFFATIRAAGYTRVSLGMQSVAPRVLATLDRVHSPGRAAAAATEAIAEGFTHVNLDLIYGTPGESDDDLVRSVDAAVQAGVDHVSAYALVVEHGTALARRVRRGELAAPDDDVLAHRYELVDARLSAAGFAWYEVSNWCRPGGECRHNLGYWDGGQWWGAGPGAHGYIGVTRWWNVKHPNTYAEILAGATLPVAGFEQLGADALHTEDVLLKVRLRQGLPLARLGAAERERAEAVLADGLLDYHGDRLVLTGRGRLLADAVVRTLLG</sequence>
<protein>
    <recommendedName>
        <fullName>Heme chaperone HemW</fullName>
    </recommendedName>
    <alternativeName>
        <fullName>Oxygen-independent coproporphyrinogen-III oxidase-like protein MT2457</fullName>
    </alternativeName>
</protein>
<comment type="function">
    <text evidence="1 2">Probably acts as a heme chaperone, transferring heme to an unknown acceptor. Binds one molecule of heme per monomer, possibly covalently (By similarity). Binds 1 [4Fe-4S] cluster. The cluster is coordinated with 3 cysteines and an exchangeable S-adenosyl-L-methionine (By similarity).</text>
</comment>
<comment type="cofactor">
    <cofactor evidence="4">
        <name>[4Fe-4S] cluster</name>
        <dbReference type="ChEBI" id="CHEBI:49883"/>
    </cofactor>
</comment>
<comment type="subcellular location">
    <subcellularLocation>
        <location evidence="3">Cytoplasm</location>
    </subcellularLocation>
</comment>
<comment type="miscellaneous">
    <text evidence="1">Might carry two S-adenosyl-L-methionine binding sites with only one binding to the iron-sulfur cluster.</text>
</comment>
<comment type="similarity">
    <text evidence="5">Belongs to the anaerobic coproporphyrinogen-III oxidase family. HemW subfamily.</text>
</comment>
<proteinExistence type="inferred from homology"/>